<gene>
    <name evidence="1" type="primary">rsmG</name>
    <name type="ordered locus">R03336</name>
    <name type="ORF">SMc02799</name>
</gene>
<sequence length="213" mass="23421">MQASLTQALNGLRVSRETVQKLEHFASLFQKWARSINLVAPSTLEDLWRRHILDSLQLYQLSPGPKTWVDLGSGGGFPGVITAICLSEAEGGWVHLVESNNKKAAFLRVALRETGARGSVHPIRIEAAPAEIPSCDAISARALADLSQLLDYCAPWMLAEGSGTVAFFHKGRDYQQEVDKAVSRFQFDLIKHASVVEPDSVVLEIANLSRRTK</sequence>
<feature type="chain" id="PRO_0000184314" description="Ribosomal RNA small subunit methyltransferase G">
    <location>
        <begin position="1"/>
        <end position="213"/>
    </location>
</feature>
<feature type="binding site" evidence="1">
    <location>
        <position position="72"/>
    </location>
    <ligand>
        <name>S-adenosyl-L-methionine</name>
        <dbReference type="ChEBI" id="CHEBI:59789"/>
    </ligand>
</feature>
<feature type="binding site" evidence="1">
    <location>
        <position position="77"/>
    </location>
    <ligand>
        <name>S-adenosyl-L-methionine</name>
        <dbReference type="ChEBI" id="CHEBI:59789"/>
    </ligand>
</feature>
<feature type="binding site" evidence="1">
    <location>
        <begin position="125"/>
        <end position="126"/>
    </location>
    <ligand>
        <name>S-adenosyl-L-methionine</name>
        <dbReference type="ChEBI" id="CHEBI:59789"/>
    </ligand>
</feature>
<feature type="binding site" evidence="1">
    <location>
        <position position="141"/>
    </location>
    <ligand>
        <name>S-adenosyl-L-methionine</name>
        <dbReference type="ChEBI" id="CHEBI:59789"/>
    </ligand>
</feature>
<protein>
    <recommendedName>
        <fullName evidence="1">Ribosomal RNA small subunit methyltransferase G</fullName>
        <ecNumber evidence="1">2.1.1.170</ecNumber>
    </recommendedName>
    <alternativeName>
        <fullName evidence="1">16S rRNA 7-methylguanosine methyltransferase</fullName>
        <shortName evidence="1">16S rRNA m7G methyltransferase</shortName>
    </alternativeName>
</protein>
<evidence type="ECO:0000255" key="1">
    <source>
        <dbReference type="HAMAP-Rule" id="MF_00074"/>
    </source>
</evidence>
<comment type="function">
    <text evidence="1">Specifically methylates the N7 position of guanine in position 527 of 16S rRNA.</text>
</comment>
<comment type="catalytic activity">
    <reaction evidence="1">
        <text>guanosine(527) in 16S rRNA + S-adenosyl-L-methionine = N(7)-methylguanosine(527) in 16S rRNA + S-adenosyl-L-homocysteine</text>
        <dbReference type="Rhea" id="RHEA:42732"/>
        <dbReference type="Rhea" id="RHEA-COMP:10209"/>
        <dbReference type="Rhea" id="RHEA-COMP:10210"/>
        <dbReference type="ChEBI" id="CHEBI:57856"/>
        <dbReference type="ChEBI" id="CHEBI:59789"/>
        <dbReference type="ChEBI" id="CHEBI:74269"/>
        <dbReference type="ChEBI" id="CHEBI:74480"/>
        <dbReference type="EC" id="2.1.1.170"/>
    </reaction>
</comment>
<comment type="subcellular location">
    <subcellularLocation>
        <location evidence="1">Cytoplasm</location>
    </subcellularLocation>
</comment>
<comment type="similarity">
    <text evidence="1">Belongs to the methyltransferase superfamily. RNA methyltransferase RsmG family.</text>
</comment>
<reference key="1">
    <citation type="journal article" date="2001" name="Proc. Natl. Acad. Sci. U.S.A.">
        <title>Analysis of the chromosome sequence of the legume symbiont Sinorhizobium meliloti strain 1021.</title>
        <authorList>
            <person name="Capela D."/>
            <person name="Barloy-Hubler F."/>
            <person name="Gouzy J."/>
            <person name="Bothe G."/>
            <person name="Ampe F."/>
            <person name="Batut J."/>
            <person name="Boistard P."/>
            <person name="Becker A."/>
            <person name="Boutry M."/>
            <person name="Cadieu E."/>
            <person name="Dreano S."/>
            <person name="Gloux S."/>
            <person name="Godrie T."/>
            <person name="Goffeau A."/>
            <person name="Kahn D."/>
            <person name="Kiss E."/>
            <person name="Lelaure V."/>
            <person name="Masuy D."/>
            <person name="Pohl T."/>
            <person name="Portetelle D."/>
            <person name="Puehler A."/>
            <person name="Purnelle B."/>
            <person name="Ramsperger U."/>
            <person name="Renard C."/>
            <person name="Thebault P."/>
            <person name="Vandenbol M."/>
            <person name="Weidner S."/>
            <person name="Galibert F."/>
        </authorList>
    </citation>
    <scope>NUCLEOTIDE SEQUENCE [LARGE SCALE GENOMIC DNA]</scope>
    <source>
        <strain>1021</strain>
    </source>
</reference>
<reference key="2">
    <citation type="journal article" date="2001" name="Science">
        <title>The composite genome of the legume symbiont Sinorhizobium meliloti.</title>
        <authorList>
            <person name="Galibert F."/>
            <person name="Finan T.M."/>
            <person name="Long S.R."/>
            <person name="Puehler A."/>
            <person name="Abola P."/>
            <person name="Ampe F."/>
            <person name="Barloy-Hubler F."/>
            <person name="Barnett M.J."/>
            <person name="Becker A."/>
            <person name="Boistard P."/>
            <person name="Bothe G."/>
            <person name="Boutry M."/>
            <person name="Bowser L."/>
            <person name="Buhrmester J."/>
            <person name="Cadieu E."/>
            <person name="Capela D."/>
            <person name="Chain P."/>
            <person name="Cowie A."/>
            <person name="Davis R.W."/>
            <person name="Dreano S."/>
            <person name="Federspiel N.A."/>
            <person name="Fisher R.F."/>
            <person name="Gloux S."/>
            <person name="Godrie T."/>
            <person name="Goffeau A."/>
            <person name="Golding B."/>
            <person name="Gouzy J."/>
            <person name="Gurjal M."/>
            <person name="Hernandez-Lucas I."/>
            <person name="Hong A."/>
            <person name="Huizar L."/>
            <person name="Hyman R.W."/>
            <person name="Jones T."/>
            <person name="Kahn D."/>
            <person name="Kahn M.L."/>
            <person name="Kalman S."/>
            <person name="Keating D.H."/>
            <person name="Kiss E."/>
            <person name="Komp C."/>
            <person name="Lelaure V."/>
            <person name="Masuy D."/>
            <person name="Palm C."/>
            <person name="Peck M.C."/>
            <person name="Pohl T.M."/>
            <person name="Portetelle D."/>
            <person name="Purnelle B."/>
            <person name="Ramsperger U."/>
            <person name="Surzycki R."/>
            <person name="Thebault P."/>
            <person name="Vandenbol M."/>
            <person name="Vorhoelter F.J."/>
            <person name="Weidner S."/>
            <person name="Wells D.H."/>
            <person name="Wong K."/>
            <person name="Yeh K.-C."/>
            <person name="Batut J."/>
        </authorList>
    </citation>
    <scope>NUCLEOTIDE SEQUENCE [LARGE SCALE GENOMIC DNA]</scope>
    <source>
        <strain>1021</strain>
    </source>
</reference>
<keyword id="KW-0963">Cytoplasm</keyword>
<keyword id="KW-0489">Methyltransferase</keyword>
<keyword id="KW-1185">Reference proteome</keyword>
<keyword id="KW-0698">rRNA processing</keyword>
<keyword id="KW-0949">S-adenosyl-L-methionine</keyword>
<keyword id="KW-0808">Transferase</keyword>
<dbReference type="EC" id="2.1.1.170" evidence="1"/>
<dbReference type="EMBL" id="AL591688">
    <property type="protein sequence ID" value="CAC47915.1"/>
    <property type="molecule type" value="Genomic_DNA"/>
</dbReference>
<dbReference type="RefSeq" id="NP_387442.1">
    <property type="nucleotide sequence ID" value="NC_003047.1"/>
</dbReference>
<dbReference type="RefSeq" id="WP_010970584.1">
    <property type="nucleotide sequence ID" value="NC_003047.1"/>
</dbReference>
<dbReference type="SMR" id="Q92KW3"/>
<dbReference type="EnsemblBacteria" id="CAC47915">
    <property type="protein sequence ID" value="CAC47915"/>
    <property type="gene ID" value="SMc02799"/>
</dbReference>
<dbReference type="KEGG" id="sme:SMc02799"/>
<dbReference type="PATRIC" id="fig|266834.11.peg.4897"/>
<dbReference type="eggNOG" id="COG0357">
    <property type="taxonomic scope" value="Bacteria"/>
</dbReference>
<dbReference type="HOGENOM" id="CLU_065341_1_1_5"/>
<dbReference type="OrthoDB" id="9808773at2"/>
<dbReference type="Proteomes" id="UP000001976">
    <property type="component" value="Chromosome"/>
</dbReference>
<dbReference type="GO" id="GO:0005829">
    <property type="term" value="C:cytosol"/>
    <property type="evidence" value="ECO:0007669"/>
    <property type="project" value="TreeGrafter"/>
</dbReference>
<dbReference type="GO" id="GO:0070043">
    <property type="term" value="F:rRNA (guanine-N7-)-methyltransferase activity"/>
    <property type="evidence" value="ECO:0007669"/>
    <property type="project" value="UniProtKB-UniRule"/>
</dbReference>
<dbReference type="Gene3D" id="3.40.50.150">
    <property type="entry name" value="Vaccinia Virus protein VP39"/>
    <property type="match status" value="1"/>
</dbReference>
<dbReference type="HAMAP" id="MF_00074">
    <property type="entry name" value="16SrRNA_methyltr_G"/>
    <property type="match status" value="1"/>
</dbReference>
<dbReference type="InterPro" id="IPR003682">
    <property type="entry name" value="rRNA_ssu_MeTfrase_G"/>
</dbReference>
<dbReference type="InterPro" id="IPR029063">
    <property type="entry name" value="SAM-dependent_MTases_sf"/>
</dbReference>
<dbReference type="NCBIfam" id="TIGR00138">
    <property type="entry name" value="rsmG_gidB"/>
    <property type="match status" value="1"/>
</dbReference>
<dbReference type="PANTHER" id="PTHR31760">
    <property type="entry name" value="S-ADENOSYL-L-METHIONINE-DEPENDENT METHYLTRANSFERASES SUPERFAMILY PROTEIN"/>
    <property type="match status" value="1"/>
</dbReference>
<dbReference type="PANTHER" id="PTHR31760:SF0">
    <property type="entry name" value="S-ADENOSYL-L-METHIONINE-DEPENDENT METHYLTRANSFERASES SUPERFAMILY PROTEIN"/>
    <property type="match status" value="1"/>
</dbReference>
<dbReference type="Pfam" id="PF02527">
    <property type="entry name" value="GidB"/>
    <property type="match status" value="1"/>
</dbReference>
<dbReference type="PIRSF" id="PIRSF003078">
    <property type="entry name" value="GidB"/>
    <property type="match status" value="1"/>
</dbReference>
<dbReference type="SUPFAM" id="SSF53335">
    <property type="entry name" value="S-adenosyl-L-methionine-dependent methyltransferases"/>
    <property type="match status" value="1"/>
</dbReference>
<proteinExistence type="inferred from homology"/>
<name>RSMG_RHIME</name>
<accession>Q92KW3</accession>
<organism>
    <name type="scientific">Rhizobium meliloti (strain 1021)</name>
    <name type="common">Ensifer meliloti</name>
    <name type="synonym">Sinorhizobium meliloti</name>
    <dbReference type="NCBI Taxonomy" id="266834"/>
    <lineage>
        <taxon>Bacteria</taxon>
        <taxon>Pseudomonadati</taxon>
        <taxon>Pseudomonadota</taxon>
        <taxon>Alphaproteobacteria</taxon>
        <taxon>Hyphomicrobiales</taxon>
        <taxon>Rhizobiaceae</taxon>
        <taxon>Sinorhizobium/Ensifer group</taxon>
        <taxon>Sinorhizobium</taxon>
    </lineage>
</organism>